<gene>
    <name evidence="1" type="primary">alaS</name>
    <name type="ordered locus">FN0697</name>
</gene>
<sequence>MLTGNEIREKFIEFFMQKQHKHFESASLIPDDPTLLLTVAGMVPFKPYFLGQKEAPCPRVTTYQKCIRTNDLENVGRTARHHTFFEMLGNFSFGNYFKKEAIKWSWEFVTEVLKINKDKLWVTVFTTDDEAEKIWIEECNFPKERIVRMGESENWWSAGPTGSCGPCSEIHVDLGIQYGGDENSKIGDEGTDNRFIEIWNLVFTEWNRMEDGSLEPLPKKNIDTGAGLERIAAVVQGKTNNFETDLLFPILEEAGKITGSQYGKNPETNFSLKVITDHARAVTFLVNDGVIPSNEGRGYILRRILRRAVRHGRLLGYKDLFMYKMVDKVVEKFEIAYPDLRKNVENIRKIVKIEEEKFSNTLDQGIQLVNQEIDNLLTNGKNKLDGEISFKLYDTYGFPYELTEEIAEERGVIVLREEFEAKMEEQKEKARSAREVVMEKGQDSFIEEFYDKYGVTEFTGYEKTEDEGKLLSLREAKDRKYLLIFDKTPFYAESGGQVGDQGKIYSDNFAGKVLDVQKQKDIFIHTVKLEKGMPEENKTYKLEVDVVKRLDTAKNHTATHLLHKALREIVGTHVQQAGSLVDSEKLRFDFSHYEALTEEQLSKIEDIVNKKIREGIEVVVSHHSIEEAKKLGAMMLFGDKYGDVVRVVDVHGFSTELCGGTHIDNIGKIGLFKITSEGGIAAGVRRIEAKTGYGAYLVEKEEADILKNIEQKLKATNSNLVEKVEKNLETLKDTEKELEILKQKLALFETKAAISGMEEIGGVKVLIAAFKDKSTEDLRTMIDTIKDNNEKAIIVLASTQDKLAFAVGVTKTLTDKIKAGDLVKKLAEITGGKGGGRPDFAQAGGKDEGKLLDAFKEVREIIEAKLV</sequence>
<keyword id="KW-0030">Aminoacyl-tRNA synthetase</keyword>
<keyword id="KW-0067">ATP-binding</keyword>
<keyword id="KW-0963">Cytoplasm</keyword>
<keyword id="KW-0436">Ligase</keyword>
<keyword id="KW-0479">Metal-binding</keyword>
<keyword id="KW-0547">Nucleotide-binding</keyword>
<keyword id="KW-0648">Protein biosynthesis</keyword>
<keyword id="KW-1185">Reference proteome</keyword>
<keyword id="KW-0694">RNA-binding</keyword>
<keyword id="KW-0820">tRNA-binding</keyword>
<keyword id="KW-0862">Zinc</keyword>
<proteinExistence type="inferred from homology"/>
<name>SYA_FUSNN</name>
<accession>Q8RFJ8</accession>
<comment type="function">
    <text evidence="1">Catalyzes the attachment of alanine to tRNA(Ala) in a two-step reaction: alanine is first activated by ATP to form Ala-AMP and then transferred to the acceptor end of tRNA(Ala). Also edits incorrectly charged Ser-tRNA(Ala) and Gly-tRNA(Ala) via its editing domain.</text>
</comment>
<comment type="catalytic activity">
    <reaction evidence="1">
        <text>tRNA(Ala) + L-alanine + ATP = L-alanyl-tRNA(Ala) + AMP + diphosphate</text>
        <dbReference type="Rhea" id="RHEA:12540"/>
        <dbReference type="Rhea" id="RHEA-COMP:9657"/>
        <dbReference type="Rhea" id="RHEA-COMP:9923"/>
        <dbReference type="ChEBI" id="CHEBI:30616"/>
        <dbReference type="ChEBI" id="CHEBI:33019"/>
        <dbReference type="ChEBI" id="CHEBI:57972"/>
        <dbReference type="ChEBI" id="CHEBI:78442"/>
        <dbReference type="ChEBI" id="CHEBI:78497"/>
        <dbReference type="ChEBI" id="CHEBI:456215"/>
        <dbReference type="EC" id="6.1.1.7"/>
    </reaction>
</comment>
<comment type="cofactor">
    <cofactor evidence="1">
        <name>Zn(2+)</name>
        <dbReference type="ChEBI" id="CHEBI:29105"/>
    </cofactor>
    <text evidence="1">Binds 1 zinc ion per subunit.</text>
</comment>
<comment type="subcellular location">
    <subcellularLocation>
        <location evidence="1">Cytoplasm</location>
    </subcellularLocation>
</comment>
<comment type="domain">
    <text evidence="1">Consists of three domains; the N-terminal catalytic domain, the editing domain and the C-terminal C-Ala domain. The editing domain removes incorrectly charged amino acids, while the C-Ala domain, along with tRNA(Ala), serves as a bridge to cooperatively bring together the editing and aminoacylation centers thus stimulating deacylation of misacylated tRNAs.</text>
</comment>
<comment type="similarity">
    <text evidence="1">Belongs to the class-II aminoacyl-tRNA synthetase family.</text>
</comment>
<organism>
    <name type="scientific">Fusobacterium nucleatum subsp. nucleatum (strain ATCC 25586 / DSM 15643 / BCRC 10681 / CIP 101130 / JCM 8532 / KCTC 2640 / LMG 13131 / VPI 4355)</name>
    <dbReference type="NCBI Taxonomy" id="190304"/>
    <lineage>
        <taxon>Bacteria</taxon>
        <taxon>Fusobacteriati</taxon>
        <taxon>Fusobacteriota</taxon>
        <taxon>Fusobacteriia</taxon>
        <taxon>Fusobacteriales</taxon>
        <taxon>Fusobacteriaceae</taxon>
        <taxon>Fusobacterium</taxon>
    </lineage>
</organism>
<reference key="1">
    <citation type="journal article" date="2002" name="J. Bacteriol.">
        <title>Genome sequence and analysis of the oral bacterium Fusobacterium nucleatum strain ATCC 25586.</title>
        <authorList>
            <person name="Kapatral V."/>
            <person name="Anderson I."/>
            <person name="Ivanova N."/>
            <person name="Reznik G."/>
            <person name="Los T."/>
            <person name="Lykidis A."/>
            <person name="Bhattacharyya A."/>
            <person name="Bartman A."/>
            <person name="Gardner W."/>
            <person name="Grechkin G."/>
            <person name="Zhu L."/>
            <person name="Vasieva O."/>
            <person name="Chu L."/>
            <person name="Kogan Y."/>
            <person name="Chaga O."/>
            <person name="Goltsman E."/>
            <person name="Bernal A."/>
            <person name="Larsen N."/>
            <person name="D'Souza M."/>
            <person name="Walunas T."/>
            <person name="Pusch G."/>
            <person name="Haselkorn R."/>
            <person name="Fonstein M."/>
            <person name="Kyrpides N.C."/>
            <person name="Overbeek R."/>
        </authorList>
    </citation>
    <scope>NUCLEOTIDE SEQUENCE [LARGE SCALE GENOMIC DNA]</scope>
    <source>
        <strain>ATCC 25586 / DSM 15643 / BCRC 10681 / CIP 101130 / JCM 8532 / KCTC 2640 / LMG 13131 / VPI 4355</strain>
    </source>
</reference>
<feature type="chain" id="PRO_0000075116" description="Alanine--tRNA ligase">
    <location>
        <begin position="1"/>
        <end position="867"/>
    </location>
</feature>
<feature type="binding site" evidence="1">
    <location>
        <position position="556"/>
    </location>
    <ligand>
        <name>Zn(2+)</name>
        <dbReference type="ChEBI" id="CHEBI:29105"/>
    </ligand>
</feature>
<feature type="binding site" evidence="1">
    <location>
        <position position="560"/>
    </location>
    <ligand>
        <name>Zn(2+)</name>
        <dbReference type="ChEBI" id="CHEBI:29105"/>
    </ligand>
</feature>
<feature type="binding site" evidence="1">
    <location>
        <position position="658"/>
    </location>
    <ligand>
        <name>Zn(2+)</name>
        <dbReference type="ChEBI" id="CHEBI:29105"/>
    </ligand>
</feature>
<feature type="binding site" evidence="1">
    <location>
        <position position="662"/>
    </location>
    <ligand>
        <name>Zn(2+)</name>
        <dbReference type="ChEBI" id="CHEBI:29105"/>
    </ligand>
</feature>
<protein>
    <recommendedName>
        <fullName evidence="1">Alanine--tRNA ligase</fullName>
        <ecNumber evidence="1">6.1.1.7</ecNumber>
    </recommendedName>
    <alternativeName>
        <fullName evidence="1">Alanyl-tRNA synthetase</fullName>
        <shortName evidence="1">AlaRS</shortName>
    </alternativeName>
</protein>
<dbReference type="EC" id="6.1.1.7" evidence="1"/>
<dbReference type="EMBL" id="AE009951">
    <property type="protein sequence ID" value="AAL94893.1"/>
    <property type="molecule type" value="Genomic_DNA"/>
</dbReference>
<dbReference type="RefSeq" id="NP_603594.1">
    <property type="nucleotide sequence ID" value="NC_003454.1"/>
</dbReference>
<dbReference type="RefSeq" id="WP_011016588.1">
    <property type="nucleotide sequence ID" value="NZ_OZ209243.1"/>
</dbReference>
<dbReference type="SMR" id="Q8RFJ8"/>
<dbReference type="FunCoup" id="Q8RFJ8">
    <property type="interactions" value="394"/>
</dbReference>
<dbReference type="STRING" id="190304.FN0697"/>
<dbReference type="PaxDb" id="190304-FN0697"/>
<dbReference type="EnsemblBacteria" id="AAL94893">
    <property type="protein sequence ID" value="AAL94893"/>
    <property type="gene ID" value="FN0697"/>
</dbReference>
<dbReference type="GeneID" id="79783693"/>
<dbReference type="KEGG" id="fnu:FN0697"/>
<dbReference type="PATRIC" id="fig|190304.8.peg.1262"/>
<dbReference type="eggNOG" id="COG0013">
    <property type="taxonomic scope" value="Bacteria"/>
</dbReference>
<dbReference type="HOGENOM" id="CLU_004485_1_1_0"/>
<dbReference type="InParanoid" id="Q8RFJ8"/>
<dbReference type="BioCyc" id="FNUC190304:G1FZS-1283-MONOMER"/>
<dbReference type="Proteomes" id="UP000002521">
    <property type="component" value="Chromosome"/>
</dbReference>
<dbReference type="GO" id="GO:0005829">
    <property type="term" value="C:cytosol"/>
    <property type="evidence" value="ECO:0000318"/>
    <property type="project" value="GO_Central"/>
</dbReference>
<dbReference type="GO" id="GO:0004813">
    <property type="term" value="F:alanine-tRNA ligase activity"/>
    <property type="evidence" value="ECO:0000318"/>
    <property type="project" value="GO_Central"/>
</dbReference>
<dbReference type="GO" id="GO:0002161">
    <property type="term" value="F:aminoacyl-tRNA deacylase activity"/>
    <property type="evidence" value="ECO:0000318"/>
    <property type="project" value="GO_Central"/>
</dbReference>
<dbReference type="GO" id="GO:0005524">
    <property type="term" value="F:ATP binding"/>
    <property type="evidence" value="ECO:0007669"/>
    <property type="project" value="UniProtKB-UniRule"/>
</dbReference>
<dbReference type="GO" id="GO:0000049">
    <property type="term" value="F:tRNA binding"/>
    <property type="evidence" value="ECO:0007669"/>
    <property type="project" value="UniProtKB-KW"/>
</dbReference>
<dbReference type="GO" id="GO:0008270">
    <property type="term" value="F:zinc ion binding"/>
    <property type="evidence" value="ECO:0007669"/>
    <property type="project" value="UniProtKB-UniRule"/>
</dbReference>
<dbReference type="GO" id="GO:0006419">
    <property type="term" value="P:alanyl-tRNA aminoacylation"/>
    <property type="evidence" value="ECO:0000318"/>
    <property type="project" value="GO_Central"/>
</dbReference>
<dbReference type="CDD" id="cd00673">
    <property type="entry name" value="AlaRS_core"/>
    <property type="match status" value="1"/>
</dbReference>
<dbReference type="FunFam" id="3.10.310.40:FF:000001">
    <property type="entry name" value="Alanine--tRNA ligase"/>
    <property type="match status" value="1"/>
</dbReference>
<dbReference type="FunFam" id="3.30.54.20:FF:000001">
    <property type="entry name" value="Alanine--tRNA ligase"/>
    <property type="match status" value="1"/>
</dbReference>
<dbReference type="FunFam" id="3.30.930.10:FF:000004">
    <property type="entry name" value="Alanine--tRNA ligase"/>
    <property type="match status" value="1"/>
</dbReference>
<dbReference type="FunFam" id="3.30.980.10:FF:000004">
    <property type="entry name" value="Alanine--tRNA ligase, cytoplasmic"/>
    <property type="match status" value="1"/>
</dbReference>
<dbReference type="Gene3D" id="2.40.30.130">
    <property type="match status" value="1"/>
</dbReference>
<dbReference type="Gene3D" id="3.10.310.40">
    <property type="match status" value="1"/>
</dbReference>
<dbReference type="Gene3D" id="3.30.54.20">
    <property type="match status" value="1"/>
</dbReference>
<dbReference type="Gene3D" id="6.10.250.550">
    <property type="match status" value="1"/>
</dbReference>
<dbReference type="Gene3D" id="3.30.930.10">
    <property type="entry name" value="Bira Bifunctional Protein, Domain 2"/>
    <property type="match status" value="1"/>
</dbReference>
<dbReference type="Gene3D" id="3.30.980.10">
    <property type="entry name" value="Threonyl-trna Synthetase, Chain A, domain 2"/>
    <property type="match status" value="1"/>
</dbReference>
<dbReference type="HAMAP" id="MF_00036_B">
    <property type="entry name" value="Ala_tRNA_synth_B"/>
    <property type="match status" value="1"/>
</dbReference>
<dbReference type="InterPro" id="IPR045864">
    <property type="entry name" value="aa-tRNA-synth_II/BPL/LPL"/>
</dbReference>
<dbReference type="InterPro" id="IPR002318">
    <property type="entry name" value="Ala-tRNA-lgiase_IIc"/>
</dbReference>
<dbReference type="InterPro" id="IPR018162">
    <property type="entry name" value="Ala-tRNA-ligase_IIc_anticod-bd"/>
</dbReference>
<dbReference type="InterPro" id="IPR018165">
    <property type="entry name" value="Ala-tRNA-synth_IIc_core"/>
</dbReference>
<dbReference type="InterPro" id="IPR018164">
    <property type="entry name" value="Ala-tRNA-synth_IIc_N"/>
</dbReference>
<dbReference type="InterPro" id="IPR050058">
    <property type="entry name" value="Ala-tRNA_ligase"/>
</dbReference>
<dbReference type="InterPro" id="IPR023033">
    <property type="entry name" value="Ala_tRNA_ligase_euk/bac"/>
</dbReference>
<dbReference type="InterPro" id="IPR003156">
    <property type="entry name" value="DHHA1_dom"/>
</dbReference>
<dbReference type="InterPro" id="IPR018163">
    <property type="entry name" value="Thr/Ala-tRNA-synth_IIc_edit"/>
</dbReference>
<dbReference type="InterPro" id="IPR009000">
    <property type="entry name" value="Transl_B-barrel_sf"/>
</dbReference>
<dbReference type="InterPro" id="IPR012947">
    <property type="entry name" value="tRNA_SAD"/>
</dbReference>
<dbReference type="NCBIfam" id="TIGR00344">
    <property type="entry name" value="alaS"/>
    <property type="match status" value="1"/>
</dbReference>
<dbReference type="PANTHER" id="PTHR11777:SF9">
    <property type="entry name" value="ALANINE--TRNA LIGASE, CYTOPLASMIC"/>
    <property type="match status" value="1"/>
</dbReference>
<dbReference type="PANTHER" id="PTHR11777">
    <property type="entry name" value="ALANYL-TRNA SYNTHETASE"/>
    <property type="match status" value="1"/>
</dbReference>
<dbReference type="Pfam" id="PF02272">
    <property type="entry name" value="DHHA1"/>
    <property type="match status" value="1"/>
</dbReference>
<dbReference type="Pfam" id="PF01411">
    <property type="entry name" value="tRNA-synt_2c"/>
    <property type="match status" value="1"/>
</dbReference>
<dbReference type="Pfam" id="PF07973">
    <property type="entry name" value="tRNA_SAD"/>
    <property type="match status" value="1"/>
</dbReference>
<dbReference type="PRINTS" id="PR00980">
    <property type="entry name" value="TRNASYNTHALA"/>
</dbReference>
<dbReference type="SMART" id="SM00863">
    <property type="entry name" value="tRNA_SAD"/>
    <property type="match status" value="1"/>
</dbReference>
<dbReference type="SUPFAM" id="SSF55681">
    <property type="entry name" value="Class II aaRS and biotin synthetases"/>
    <property type="match status" value="1"/>
</dbReference>
<dbReference type="SUPFAM" id="SSF101353">
    <property type="entry name" value="Putative anticodon-binding domain of alanyl-tRNA synthetase (AlaRS)"/>
    <property type="match status" value="1"/>
</dbReference>
<dbReference type="SUPFAM" id="SSF55186">
    <property type="entry name" value="ThrRS/AlaRS common domain"/>
    <property type="match status" value="1"/>
</dbReference>
<dbReference type="SUPFAM" id="SSF50447">
    <property type="entry name" value="Translation proteins"/>
    <property type="match status" value="1"/>
</dbReference>
<dbReference type="PROSITE" id="PS50860">
    <property type="entry name" value="AA_TRNA_LIGASE_II_ALA"/>
    <property type="match status" value="1"/>
</dbReference>
<evidence type="ECO:0000255" key="1">
    <source>
        <dbReference type="HAMAP-Rule" id="MF_00036"/>
    </source>
</evidence>